<name>TRUA_NITEU</name>
<comment type="function">
    <text evidence="1">Formation of pseudouridine at positions 38, 39 and 40 in the anticodon stem and loop of transfer RNAs.</text>
</comment>
<comment type="catalytic activity">
    <reaction evidence="1">
        <text>uridine(38/39/40) in tRNA = pseudouridine(38/39/40) in tRNA</text>
        <dbReference type="Rhea" id="RHEA:22376"/>
        <dbReference type="Rhea" id="RHEA-COMP:10085"/>
        <dbReference type="Rhea" id="RHEA-COMP:10087"/>
        <dbReference type="ChEBI" id="CHEBI:65314"/>
        <dbReference type="ChEBI" id="CHEBI:65315"/>
        <dbReference type="EC" id="5.4.99.12"/>
    </reaction>
</comment>
<comment type="subunit">
    <text evidence="1">Homodimer.</text>
</comment>
<comment type="similarity">
    <text evidence="1">Belongs to the tRNA pseudouridine synthase TruA family.</text>
</comment>
<evidence type="ECO:0000255" key="1">
    <source>
        <dbReference type="HAMAP-Rule" id="MF_00171"/>
    </source>
</evidence>
<accession>Q820P8</accession>
<dbReference type="EC" id="5.4.99.12" evidence="1"/>
<dbReference type="EMBL" id="AL954747">
    <property type="protein sequence ID" value="CAD84602.1"/>
    <property type="molecule type" value="Genomic_DNA"/>
</dbReference>
<dbReference type="SMR" id="Q820P8"/>
<dbReference type="STRING" id="228410.NE0691"/>
<dbReference type="KEGG" id="neu:NE0691"/>
<dbReference type="eggNOG" id="COG0101">
    <property type="taxonomic scope" value="Bacteria"/>
</dbReference>
<dbReference type="HOGENOM" id="CLU_014673_0_2_4"/>
<dbReference type="PhylomeDB" id="Q820P8"/>
<dbReference type="Proteomes" id="UP000001416">
    <property type="component" value="Chromosome"/>
</dbReference>
<dbReference type="GO" id="GO:0003723">
    <property type="term" value="F:RNA binding"/>
    <property type="evidence" value="ECO:0007669"/>
    <property type="project" value="InterPro"/>
</dbReference>
<dbReference type="GO" id="GO:0160147">
    <property type="term" value="F:tRNA pseudouridine(38-40) synthase activity"/>
    <property type="evidence" value="ECO:0007669"/>
    <property type="project" value="UniProtKB-EC"/>
</dbReference>
<dbReference type="GO" id="GO:0031119">
    <property type="term" value="P:tRNA pseudouridine synthesis"/>
    <property type="evidence" value="ECO:0007669"/>
    <property type="project" value="UniProtKB-UniRule"/>
</dbReference>
<dbReference type="CDD" id="cd02570">
    <property type="entry name" value="PseudoU_synth_EcTruA"/>
    <property type="match status" value="1"/>
</dbReference>
<dbReference type="FunFam" id="3.30.70.580:FF:000001">
    <property type="entry name" value="tRNA pseudouridine synthase A"/>
    <property type="match status" value="1"/>
</dbReference>
<dbReference type="Gene3D" id="3.30.70.660">
    <property type="entry name" value="Pseudouridine synthase I, catalytic domain, C-terminal subdomain"/>
    <property type="match status" value="1"/>
</dbReference>
<dbReference type="Gene3D" id="3.30.70.580">
    <property type="entry name" value="Pseudouridine synthase I, catalytic domain, N-terminal subdomain"/>
    <property type="match status" value="1"/>
</dbReference>
<dbReference type="HAMAP" id="MF_00171">
    <property type="entry name" value="TruA"/>
    <property type="match status" value="1"/>
</dbReference>
<dbReference type="InterPro" id="IPR020103">
    <property type="entry name" value="PsdUridine_synth_cat_dom_sf"/>
</dbReference>
<dbReference type="InterPro" id="IPR001406">
    <property type="entry name" value="PsdUridine_synth_TruA"/>
</dbReference>
<dbReference type="InterPro" id="IPR020097">
    <property type="entry name" value="PsdUridine_synth_TruA_a/b_dom"/>
</dbReference>
<dbReference type="InterPro" id="IPR020095">
    <property type="entry name" value="PsdUridine_synth_TruA_C"/>
</dbReference>
<dbReference type="InterPro" id="IPR020094">
    <property type="entry name" value="TruA/RsuA/RluB/E/F_N"/>
</dbReference>
<dbReference type="NCBIfam" id="TIGR00071">
    <property type="entry name" value="hisT_truA"/>
    <property type="match status" value="1"/>
</dbReference>
<dbReference type="PANTHER" id="PTHR11142">
    <property type="entry name" value="PSEUDOURIDYLATE SYNTHASE"/>
    <property type="match status" value="1"/>
</dbReference>
<dbReference type="PANTHER" id="PTHR11142:SF0">
    <property type="entry name" value="TRNA PSEUDOURIDINE SYNTHASE-LIKE 1"/>
    <property type="match status" value="1"/>
</dbReference>
<dbReference type="Pfam" id="PF01416">
    <property type="entry name" value="PseudoU_synth_1"/>
    <property type="match status" value="2"/>
</dbReference>
<dbReference type="PIRSF" id="PIRSF001430">
    <property type="entry name" value="tRNA_psdUrid_synth"/>
    <property type="match status" value="1"/>
</dbReference>
<dbReference type="SUPFAM" id="SSF55120">
    <property type="entry name" value="Pseudouridine synthase"/>
    <property type="match status" value="1"/>
</dbReference>
<sequence>MIPPKRNKHFFVKIVLALEYDGRGYCGWQKQPGCLSVQSRLESALSGVAGRQIQVVAAGRTDAGVHALCQVVHLETCVRRPLNAWIRGTNALLPGDISILEASEVSDDFHARFSATERTYLYYLLSRPARPGIHHGKIGWVHYPLDLEKMQMAAKLLIGKHDFSAFRSSECQSRTAIRQLTRLNISQHQQLFVFEFCANAFLHHMVRNILGGLVYIGRGKYPPEWMRILLEKRDRTLAAPTFSPDGLYLSGVRYDARWNLPVFNVTRPLDII</sequence>
<keyword id="KW-0413">Isomerase</keyword>
<keyword id="KW-1185">Reference proteome</keyword>
<keyword id="KW-0819">tRNA processing</keyword>
<proteinExistence type="inferred from homology"/>
<reference key="1">
    <citation type="journal article" date="2003" name="J. Bacteriol.">
        <title>Complete genome sequence of the ammonia-oxidizing bacterium and obligate chemolithoautotroph Nitrosomonas europaea.</title>
        <authorList>
            <person name="Chain P."/>
            <person name="Lamerdin J.E."/>
            <person name="Larimer F.W."/>
            <person name="Regala W."/>
            <person name="Lao V."/>
            <person name="Land M.L."/>
            <person name="Hauser L."/>
            <person name="Hooper A.B."/>
            <person name="Klotz M.G."/>
            <person name="Norton J."/>
            <person name="Sayavedra-Soto L.A."/>
            <person name="Arciero D.M."/>
            <person name="Hommes N.G."/>
            <person name="Whittaker M.M."/>
            <person name="Arp D.J."/>
        </authorList>
    </citation>
    <scope>NUCLEOTIDE SEQUENCE [LARGE SCALE GENOMIC DNA]</scope>
    <source>
        <strain>ATCC 19718 / CIP 103999 / KCTC 2705 / NBRC 14298</strain>
    </source>
</reference>
<gene>
    <name evidence="1" type="primary">truA</name>
    <name type="ordered locus">NE0691</name>
</gene>
<feature type="chain" id="PRO_0000057421" description="tRNA pseudouridine synthase A">
    <location>
        <begin position="1"/>
        <end position="272"/>
    </location>
</feature>
<feature type="active site" description="Nucleophile" evidence="1">
    <location>
        <position position="62"/>
    </location>
</feature>
<feature type="binding site" evidence="1">
    <location>
        <position position="120"/>
    </location>
    <ligand>
        <name>substrate</name>
    </ligand>
</feature>
<protein>
    <recommendedName>
        <fullName evidence="1">tRNA pseudouridine synthase A</fullName>
        <ecNumber evidence="1">5.4.99.12</ecNumber>
    </recommendedName>
    <alternativeName>
        <fullName evidence="1">tRNA pseudouridine(38-40) synthase</fullName>
    </alternativeName>
    <alternativeName>
        <fullName evidence="1">tRNA pseudouridylate synthase I</fullName>
    </alternativeName>
    <alternativeName>
        <fullName evidence="1">tRNA-uridine isomerase I</fullName>
    </alternativeName>
</protein>
<organism>
    <name type="scientific">Nitrosomonas europaea (strain ATCC 19718 / CIP 103999 / KCTC 2705 / NBRC 14298)</name>
    <dbReference type="NCBI Taxonomy" id="228410"/>
    <lineage>
        <taxon>Bacteria</taxon>
        <taxon>Pseudomonadati</taxon>
        <taxon>Pseudomonadota</taxon>
        <taxon>Betaproteobacteria</taxon>
        <taxon>Nitrosomonadales</taxon>
        <taxon>Nitrosomonadaceae</taxon>
        <taxon>Nitrosomonas</taxon>
    </lineage>
</organism>